<dbReference type="EMBL" id="AK041099">
    <property type="protein sequence ID" value="BAC30821.1"/>
    <property type="molecule type" value="mRNA"/>
</dbReference>
<dbReference type="EMBL" id="AK036671">
    <property type="protein sequence ID" value="BAE43297.1"/>
    <property type="molecule type" value="mRNA"/>
</dbReference>
<dbReference type="CCDS" id="CCDS48451.1"/>
<dbReference type="RefSeq" id="NP_001156410.1">
    <property type="nucleotide sequence ID" value="NM_001162938.2"/>
</dbReference>
<dbReference type="SMR" id="Q3V3Q4"/>
<dbReference type="BioGRID" id="780105">
    <property type="interactions" value="3"/>
</dbReference>
<dbReference type="FunCoup" id="Q3V3Q4">
    <property type="interactions" value="1065"/>
</dbReference>
<dbReference type="STRING" id="10090.ENSMUSP00000083039"/>
<dbReference type="GlyGen" id="Q3V3Q4">
    <property type="glycosylation" value="2 sites"/>
</dbReference>
<dbReference type="jPOST" id="Q3V3Q4"/>
<dbReference type="PaxDb" id="10090-ENSMUSP00000083039"/>
<dbReference type="Ensembl" id="ENSMUST00000085876.12">
    <property type="protein sequence ID" value="ENSMUSP00000083039.4"/>
    <property type="gene ID" value="ENSMUSG00000066677.13"/>
</dbReference>
<dbReference type="Ensembl" id="ENSMUST00000169857.2">
    <property type="protein sequence ID" value="ENSMUSP00000128958.2"/>
    <property type="gene ID" value="ENSMUSG00000066677.13"/>
</dbReference>
<dbReference type="GeneID" id="100033459"/>
<dbReference type="KEGG" id="mmu:100033459"/>
<dbReference type="UCSC" id="uc007drt.1">
    <property type="organism name" value="mouse"/>
</dbReference>
<dbReference type="AGR" id="MGI:2442822"/>
<dbReference type="CTD" id="100033459"/>
<dbReference type="MGI" id="MGI:2442822">
    <property type="gene designation" value="Ifi208"/>
</dbReference>
<dbReference type="VEuPathDB" id="HostDB:ENSMUSG00000066677"/>
<dbReference type="eggNOG" id="ENOG502QTQS">
    <property type="taxonomic scope" value="Eukaryota"/>
</dbReference>
<dbReference type="GeneTree" id="ENSGT00390000013296"/>
<dbReference type="HOGENOM" id="CLU_465355_0_0_1"/>
<dbReference type="InParanoid" id="Q3V3Q4"/>
<dbReference type="OrthoDB" id="9622064at2759"/>
<dbReference type="PhylomeDB" id="Q3V3Q4"/>
<dbReference type="TreeFam" id="TF337385"/>
<dbReference type="BioGRID-ORCS" id="100033459">
    <property type="hits" value="2 hits in 78 CRISPR screens"/>
</dbReference>
<dbReference type="ChiTaRS" id="Ifi208">
    <property type="organism name" value="mouse"/>
</dbReference>
<dbReference type="PRO" id="PR:Q3V3Q4"/>
<dbReference type="Proteomes" id="UP000000589">
    <property type="component" value="Chromosome 1"/>
</dbReference>
<dbReference type="RNAct" id="Q3V3Q4">
    <property type="molecule type" value="protein"/>
</dbReference>
<dbReference type="Bgee" id="ENSMUSG00000066677">
    <property type="expression patterns" value="Expressed in thymus and 24 other cell types or tissues"/>
</dbReference>
<dbReference type="GO" id="GO:0002218">
    <property type="term" value="P:activation of innate immune response"/>
    <property type="evidence" value="ECO:0007669"/>
    <property type="project" value="InterPro"/>
</dbReference>
<dbReference type="GO" id="GO:0035458">
    <property type="term" value="P:cellular response to interferon-beta"/>
    <property type="evidence" value="ECO:0007669"/>
    <property type="project" value="InterPro"/>
</dbReference>
<dbReference type="CDD" id="cd08305">
    <property type="entry name" value="Pyrin"/>
    <property type="match status" value="1"/>
</dbReference>
<dbReference type="FunFam" id="1.10.533.10:FF:000011">
    <property type="entry name" value="Myeloid cell nuclear differentiation antigen"/>
    <property type="match status" value="1"/>
</dbReference>
<dbReference type="Gene3D" id="1.10.533.10">
    <property type="entry name" value="Death Domain, Fas"/>
    <property type="match status" value="1"/>
</dbReference>
<dbReference type="InterPro" id="IPR004020">
    <property type="entry name" value="DAPIN"/>
</dbReference>
<dbReference type="InterPro" id="IPR011029">
    <property type="entry name" value="DEATH-like_dom_sf"/>
</dbReference>
<dbReference type="InterPro" id="IPR040205">
    <property type="entry name" value="HIN-200"/>
</dbReference>
<dbReference type="PANTHER" id="PTHR12200:SF28">
    <property type="entry name" value="INTEFERON-ACTIVABLE PROTEIN 208-RELATED"/>
    <property type="match status" value="1"/>
</dbReference>
<dbReference type="PANTHER" id="PTHR12200">
    <property type="entry name" value="INTERFERON-INDUCIBLE PROTEIN AIM2 FAMILY MEMBER"/>
    <property type="match status" value="1"/>
</dbReference>
<dbReference type="Pfam" id="PF02758">
    <property type="entry name" value="PYRIN"/>
    <property type="match status" value="1"/>
</dbReference>
<dbReference type="SMART" id="SM01289">
    <property type="entry name" value="PYRIN"/>
    <property type="match status" value="1"/>
</dbReference>
<dbReference type="PROSITE" id="PS50824">
    <property type="entry name" value="DAPIN"/>
    <property type="match status" value="1"/>
</dbReference>
<evidence type="ECO:0000255" key="1">
    <source>
        <dbReference type="PROSITE-ProRule" id="PRU00061"/>
    </source>
</evidence>
<evidence type="ECO:0000256" key="2">
    <source>
        <dbReference type="SAM" id="MobiDB-lite"/>
    </source>
</evidence>
<evidence type="ECO:0000305" key="3"/>
<evidence type="ECO:0000312" key="4">
    <source>
        <dbReference type="MGI" id="MGI:2442822"/>
    </source>
</evidence>
<reference key="1">
    <citation type="journal article" date="2005" name="Science">
        <title>The transcriptional landscape of the mammalian genome.</title>
        <authorList>
            <person name="Carninci P."/>
            <person name="Kasukawa T."/>
            <person name="Katayama S."/>
            <person name="Gough J."/>
            <person name="Frith M.C."/>
            <person name="Maeda N."/>
            <person name="Oyama R."/>
            <person name="Ravasi T."/>
            <person name="Lenhard B."/>
            <person name="Wells C."/>
            <person name="Kodzius R."/>
            <person name="Shimokawa K."/>
            <person name="Bajic V.B."/>
            <person name="Brenner S.E."/>
            <person name="Batalov S."/>
            <person name="Forrest A.R."/>
            <person name="Zavolan M."/>
            <person name="Davis M.J."/>
            <person name="Wilming L.G."/>
            <person name="Aidinis V."/>
            <person name="Allen J.E."/>
            <person name="Ambesi-Impiombato A."/>
            <person name="Apweiler R."/>
            <person name="Aturaliya R.N."/>
            <person name="Bailey T.L."/>
            <person name="Bansal M."/>
            <person name="Baxter L."/>
            <person name="Beisel K.W."/>
            <person name="Bersano T."/>
            <person name="Bono H."/>
            <person name="Chalk A.M."/>
            <person name="Chiu K.P."/>
            <person name="Choudhary V."/>
            <person name="Christoffels A."/>
            <person name="Clutterbuck D.R."/>
            <person name="Crowe M.L."/>
            <person name="Dalla E."/>
            <person name="Dalrymple B.P."/>
            <person name="de Bono B."/>
            <person name="Della Gatta G."/>
            <person name="di Bernardo D."/>
            <person name="Down T."/>
            <person name="Engstrom P."/>
            <person name="Fagiolini M."/>
            <person name="Faulkner G."/>
            <person name="Fletcher C.F."/>
            <person name="Fukushima T."/>
            <person name="Furuno M."/>
            <person name="Futaki S."/>
            <person name="Gariboldi M."/>
            <person name="Georgii-Hemming P."/>
            <person name="Gingeras T.R."/>
            <person name="Gojobori T."/>
            <person name="Green R.E."/>
            <person name="Gustincich S."/>
            <person name="Harbers M."/>
            <person name="Hayashi Y."/>
            <person name="Hensch T.K."/>
            <person name="Hirokawa N."/>
            <person name="Hill D."/>
            <person name="Huminiecki L."/>
            <person name="Iacono M."/>
            <person name="Ikeo K."/>
            <person name="Iwama A."/>
            <person name="Ishikawa T."/>
            <person name="Jakt M."/>
            <person name="Kanapin A."/>
            <person name="Katoh M."/>
            <person name="Kawasawa Y."/>
            <person name="Kelso J."/>
            <person name="Kitamura H."/>
            <person name="Kitano H."/>
            <person name="Kollias G."/>
            <person name="Krishnan S.P."/>
            <person name="Kruger A."/>
            <person name="Kummerfeld S.K."/>
            <person name="Kurochkin I.V."/>
            <person name="Lareau L.F."/>
            <person name="Lazarevic D."/>
            <person name="Lipovich L."/>
            <person name="Liu J."/>
            <person name="Liuni S."/>
            <person name="McWilliam S."/>
            <person name="Madan Babu M."/>
            <person name="Madera M."/>
            <person name="Marchionni L."/>
            <person name="Matsuda H."/>
            <person name="Matsuzawa S."/>
            <person name="Miki H."/>
            <person name="Mignone F."/>
            <person name="Miyake S."/>
            <person name="Morris K."/>
            <person name="Mottagui-Tabar S."/>
            <person name="Mulder N."/>
            <person name="Nakano N."/>
            <person name="Nakauchi H."/>
            <person name="Ng P."/>
            <person name="Nilsson R."/>
            <person name="Nishiguchi S."/>
            <person name="Nishikawa S."/>
            <person name="Nori F."/>
            <person name="Ohara O."/>
            <person name="Okazaki Y."/>
            <person name="Orlando V."/>
            <person name="Pang K.C."/>
            <person name="Pavan W.J."/>
            <person name="Pavesi G."/>
            <person name="Pesole G."/>
            <person name="Petrovsky N."/>
            <person name="Piazza S."/>
            <person name="Reed J."/>
            <person name="Reid J.F."/>
            <person name="Ring B.Z."/>
            <person name="Ringwald M."/>
            <person name="Rost B."/>
            <person name="Ruan Y."/>
            <person name="Salzberg S.L."/>
            <person name="Sandelin A."/>
            <person name="Schneider C."/>
            <person name="Schoenbach C."/>
            <person name="Sekiguchi K."/>
            <person name="Semple C.A."/>
            <person name="Seno S."/>
            <person name="Sessa L."/>
            <person name="Sheng Y."/>
            <person name="Shibata Y."/>
            <person name="Shimada H."/>
            <person name="Shimada K."/>
            <person name="Silva D."/>
            <person name="Sinclair B."/>
            <person name="Sperling S."/>
            <person name="Stupka E."/>
            <person name="Sugiura K."/>
            <person name="Sultana R."/>
            <person name="Takenaka Y."/>
            <person name="Taki K."/>
            <person name="Tammoja K."/>
            <person name="Tan S.L."/>
            <person name="Tang S."/>
            <person name="Taylor M.S."/>
            <person name="Tegner J."/>
            <person name="Teichmann S.A."/>
            <person name="Ueda H.R."/>
            <person name="van Nimwegen E."/>
            <person name="Verardo R."/>
            <person name="Wei C.L."/>
            <person name="Yagi K."/>
            <person name="Yamanishi H."/>
            <person name="Zabarovsky E."/>
            <person name="Zhu S."/>
            <person name="Zimmer A."/>
            <person name="Hide W."/>
            <person name="Bult C."/>
            <person name="Grimmond S.M."/>
            <person name="Teasdale R.D."/>
            <person name="Liu E.T."/>
            <person name="Brusic V."/>
            <person name="Quackenbush J."/>
            <person name="Wahlestedt C."/>
            <person name="Mattick J.S."/>
            <person name="Hume D.A."/>
            <person name="Kai C."/>
            <person name="Sasaki D."/>
            <person name="Tomaru Y."/>
            <person name="Fukuda S."/>
            <person name="Kanamori-Katayama M."/>
            <person name="Suzuki M."/>
            <person name="Aoki J."/>
            <person name="Arakawa T."/>
            <person name="Iida J."/>
            <person name="Imamura K."/>
            <person name="Itoh M."/>
            <person name="Kato T."/>
            <person name="Kawaji H."/>
            <person name="Kawagashira N."/>
            <person name="Kawashima T."/>
            <person name="Kojima M."/>
            <person name="Kondo S."/>
            <person name="Konno H."/>
            <person name="Nakano K."/>
            <person name="Ninomiya N."/>
            <person name="Nishio T."/>
            <person name="Okada M."/>
            <person name="Plessy C."/>
            <person name="Shibata K."/>
            <person name="Shiraki T."/>
            <person name="Suzuki S."/>
            <person name="Tagami M."/>
            <person name="Waki K."/>
            <person name="Watahiki A."/>
            <person name="Okamura-Oho Y."/>
            <person name="Suzuki H."/>
            <person name="Kawai J."/>
            <person name="Hayashizaki Y."/>
        </authorList>
    </citation>
    <scope>NUCLEOTIDE SEQUENCE [LARGE SCALE MRNA]</scope>
    <source>
        <strain>C57BL/6J</strain>
        <tissue>Aorta</tissue>
        <tissue>Bone</tissue>
        <tissue>Vein</tissue>
    </source>
</reference>
<protein>
    <recommendedName>
        <fullName evidence="3">Interferon-activable protein 208</fullName>
    </recommendedName>
    <alternativeName>
        <fullName evidence="4">Interferon activated gene 208</fullName>
    </alternativeName>
    <alternativeName>
        <fullName>Interferon-activable protein 204-like</fullName>
        <shortName>Ifi-204-like</shortName>
    </alternativeName>
    <alternativeName>
        <fullName evidence="4">Pyrin domain-containing protein 3</fullName>
    </alternativeName>
</protein>
<sequence length="588" mass="63866">MTGEMVNYYKQIVLLSGLEYMNDYNFRALKSLLNHDLKLTKNMQDDYDRIKIADLMEEKFPEDAGLSKLIEVCEDIPELAARVDILRKEMEKVKNKTKIKSESSPLPLTSSLMEAWEVEPAMVTASSEESKDTIPESPDTMTTQFLEEKPKFPLLSATSTSQAEGEPLTPQRFPTTASSSLQTPLEPTEILSTILATSQGSSAPYSTCDKSSRVPPVTVSSSLQTIQTCQATSTLPCSHHTSLESPKTEPSSVQATQMTQAIKASGHNCPQVPASAVSSSFIKPQVTPAMLLSGVQTPLMPQATVPSRAQTFQLTPAKMTSGCNSPQMSAATVYSSYSNPQVTPVHSSVQILQMNLAAMTIGCNSPHVSAATVSSPYNNPWVTPATFPRNAQTLQLYPAAMAHACNSPQVSAATISSSYNNTPQVSSVTVPRSFPAMSLSPAKPLKAKIGSHLGATDQLVKDHQFEDNEMQNPQSGLGTGLSDQPRLSRTQSRTEKRRRKQEEQPLATKMKRLSLSPPQTTARRVNPMPTWGQLKKLTREAEGLVQRTGNKLSSETMFLAMLALIAMQSSSEICNYDKGGHSGTSSEK</sequence>
<organism>
    <name type="scientific">Mus musculus</name>
    <name type="common">Mouse</name>
    <dbReference type="NCBI Taxonomy" id="10090"/>
    <lineage>
        <taxon>Eukaryota</taxon>
        <taxon>Metazoa</taxon>
        <taxon>Chordata</taxon>
        <taxon>Craniata</taxon>
        <taxon>Vertebrata</taxon>
        <taxon>Euteleostomi</taxon>
        <taxon>Mammalia</taxon>
        <taxon>Eutheria</taxon>
        <taxon>Euarchontoglires</taxon>
        <taxon>Glires</taxon>
        <taxon>Rodentia</taxon>
        <taxon>Myomorpha</taxon>
        <taxon>Muroidea</taxon>
        <taxon>Muridae</taxon>
        <taxon>Murinae</taxon>
        <taxon>Mus</taxon>
        <taxon>Mus</taxon>
    </lineage>
</organism>
<proteinExistence type="evidence at transcript level"/>
<comment type="similarity">
    <text evidence="3">Belongs to the HIN-200 family.</text>
</comment>
<keyword id="KW-1185">Reference proteome</keyword>
<gene>
    <name evidence="4" type="primary">Ifi208</name>
    <name evidence="4" type="synonym">Pydc3</name>
</gene>
<accession>Q3V3Q4</accession>
<accession>Q8BLW5</accession>
<name>IFI8_MOUSE</name>
<feature type="chain" id="PRO_0000334522" description="Interferon-activable protein 208">
    <location>
        <begin position="1"/>
        <end position="588"/>
    </location>
</feature>
<feature type="domain" description="Pyrin" evidence="1">
    <location>
        <begin position="5"/>
        <end position="92"/>
    </location>
</feature>
<feature type="region of interest" description="Disordered" evidence="2">
    <location>
        <begin position="157"/>
        <end position="183"/>
    </location>
</feature>
<feature type="region of interest" description="Disordered" evidence="2">
    <location>
        <begin position="469"/>
        <end position="526"/>
    </location>
</feature>
<feature type="compositionally biased region" description="Polar residues" evidence="2">
    <location>
        <begin position="172"/>
        <end position="183"/>
    </location>
</feature>
<feature type="compositionally biased region" description="Polar residues" evidence="2">
    <location>
        <begin position="470"/>
        <end position="487"/>
    </location>
</feature>